<sequence>MTRPTSSAPSQRMLRVGEQVRAAITQVLQRGEVRDDIIEATVISISEVRMSPDLKIATAYVTPLGVSDHSIVIEALNRHAKFIRGRLGPQLRQMKYMPEVRFRDDTSFDNYKKIDELLRSPEVSRDLDSDSDSDEK</sequence>
<name>RBFA_RHIEC</name>
<evidence type="ECO:0000255" key="1">
    <source>
        <dbReference type="HAMAP-Rule" id="MF_00003"/>
    </source>
</evidence>
<proteinExistence type="inferred from homology"/>
<organism>
    <name type="scientific">Rhizobium etli (strain ATCC 51251 / DSM 11541 / JCM 21823 / NBRC 15573 / CFN 42)</name>
    <dbReference type="NCBI Taxonomy" id="347834"/>
    <lineage>
        <taxon>Bacteria</taxon>
        <taxon>Pseudomonadati</taxon>
        <taxon>Pseudomonadota</taxon>
        <taxon>Alphaproteobacteria</taxon>
        <taxon>Hyphomicrobiales</taxon>
        <taxon>Rhizobiaceae</taxon>
        <taxon>Rhizobium/Agrobacterium group</taxon>
        <taxon>Rhizobium</taxon>
    </lineage>
</organism>
<gene>
    <name evidence="1" type="primary">rbfA</name>
    <name type="ordered locus">RHE_CH00115</name>
</gene>
<keyword id="KW-0963">Cytoplasm</keyword>
<keyword id="KW-1185">Reference proteome</keyword>
<keyword id="KW-0690">Ribosome biogenesis</keyword>
<dbReference type="EMBL" id="CP000133">
    <property type="protein sequence ID" value="ABC88940.1"/>
    <property type="molecule type" value="Genomic_DNA"/>
</dbReference>
<dbReference type="RefSeq" id="WP_011423510.1">
    <property type="nucleotide sequence ID" value="NC_007761.1"/>
</dbReference>
<dbReference type="SMR" id="Q2KDZ6"/>
<dbReference type="KEGG" id="ret:RHE_CH00115"/>
<dbReference type="eggNOG" id="COG0858">
    <property type="taxonomic scope" value="Bacteria"/>
</dbReference>
<dbReference type="HOGENOM" id="CLU_089475_1_0_5"/>
<dbReference type="OrthoDB" id="9805051at2"/>
<dbReference type="Proteomes" id="UP000001936">
    <property type="component" value="Chromosome"/>
</dbReference>
<dbReference type="GO" id="GO:0005829">
    <property type="term" value="C:cytosol"/>
    <property type="evidence" value="ECO:0007669"/>
    <property type="project" value="TreeGrafter"/>
</dbReference>
<dbReference type="GO" id="GO:0043024">
    <property type="term" value="F:ribosomal small subunit binding"/>
    <property type="evidence" value="ECO:0007669"/>
    <property type="project" value="TreeGrafter"/>
</dbReference>
<dbReference type="GO" id="GO:0030490">
    <property type="term" value="P:maturation of SSU-rRNA"/>
    <property type="evidence" value="ECO:0007669"/>
    <property type="project" value="UniProtKB-UniRule"/>
</dbReference>
<dbReference type="Gene3D" id="3.30.300.20">
    <property type="match status" value="1"/>
</dbReference>
<dbReference type="HAMAP" id="MF_00003">
    <property type="entry name" value="RbfA"/>
    <property type="match status" value="1"/>
</dbReference>
<dbReference type="InterPro" id="IPR015946">
    <property type="entry name" value="KH_dom-like_a/b"/>
</dbReference>
<dbReference type="InterPro" id="IPR000238">
    <property type="entry name" value="RbfA"/>
</dbReference>
<dbReference type="InterPro" id="IPR023799">
    <property type="entry name" value="RbfA_dom_sf"/>
</dbReference>
<dbReference type="InterPro" id="IPR020053">
    <property type="entry name" value="Ribosome-bd_factorA_CS"/>
</dbReference>
<dbReference type="NCBIfam" id="NF001802">
    <property type="entry name" value="PRK00521.2-5"/>
    <property type="match status" value="1"/>
</dbReference>
<dbReference type="NCBIfam" id="TIGR00082">
    <property type="entry name" value="rbfA"/>
    <property type="match status" value="1"/>
</dbReference>
<dbReference type="PANTHER" id="PTHR33515">
    <property type="entry name" value="RIBOSOME-BINDING FACTOR A, CHLOROPLASTIC-RELATED"/>
    <property type="match status" value="1"/>
</dbReference>
<dbReference type="PANTHER" id="PTHR33515:SF1">
    <property type="entry name" value="RIBOSOME-BINDING FACTOR A, CHLOROPLASTIC-RELATED"/>
    <property type="match status" value="1"/>
</dbReference>
<dbReference type="Pfam" id="PF02033">
    <property type="entry name" value="RBFA"/>
    <property type="match status" value="1"/>
</dbReference>
<dbReference type="SUPFAM" id="SSF89919">
    <property type="entry name" value="Ribosome-binding factor A, RbfA"/>
    <property type="match status" value="1"/>
</dbReference>
<dbReference type="PROSITE" id="PS01319">
    <property type="entry name" value="RBFA"/>
    <property type="match status" value="1"/>
</dbReference>
<feature type="chain" id="PRO_1000000186" description="Ribosome-binding factor A">
    <location>
        <begin position="1"/>
        <end position="136"/>
    </location>
</feature>
<reference key="1">
    <citation type="journal article" date="2006" name="Proc. Natl. Acad. Sci. U.S.A.">
        <title>The partitioned Rhizobium etli genome: genetic and metabolic redundancy in seven interacting replicons.</title>
        <authorList>
            <person name="Gonzalez V."/>
            <person name="Santamaria R.I."/>
            <person name="Bustos P."/>
            <person name="Hernandez-Gonzalez I."/>
            <person name="Medrano-Soto A."/>
            <person name="Moreno-Hagelsieb G."/>
            <person name="Janga S.C."/>
            <person name="Ramirez M.A."/>
            <person name="Jimenez-Jacinto V."/>
            <person name="Collado-Vides J."/>
            <person name="Davila G."/>
        </authorList>
    </citation>
    <scope>NUCLEOTIDE SEQUENCE [LARGE SCALE GENOMIC DNA]</scope>
    <source>
        <strain>ATCC 51251 / DSM 11541 / JCM 21823 / NBRC 15573 / CFN 42</strain>
    </source>
</reference>
<accession>Q2KDZ6</accession>
<protein>
    <recommendedName>
        <fullName evidence="1">Ribosome-binding factor A</fullName>
    </recommendedName>
</protein>
<comment type="function">
    <text evidence="1">One of several proteins that assist in the late maturation steps of the functional core of the 30S ribosomal subunit. Associates with free 30S ribosomal subunits (but not with 30S subunits that are part of 70S ribosomes or polysomes). Required for efficient processing of 16S rRNA. May interact with the 5'-terminal helix region of 16S rRNA.</text>
</comment>
<comment type="subunit">
    <text evidence="1">Monomer. Binds 30S ribosomal subunits, but not 50S ribosomal subunits or 70S ribosomes.</text>
</comment>
<comment type="subcellular location">
    <subcellularLocation>
        <location evidence="1">Cytoplasm</location>
    </subcellularLocation>
</comment>
<comment type="similarity">
    <text evidence="1">Belongs to the RbfA family.</text>
</comment>